<dbReference type="EC" id="3.2.2.-" evidence="1"/>
<dbReference type="EMBL" id="U00096">
    <property type="protein sequence ID" value="AAC74002.1"/>
    <property type="molecule type" value="Genomic_DNA"/>
</dbReference>
<dbReference type="EMBL" id="AP009048">
    <property type="protein sequence ID" value="BAA35662.1"/>
    <property type="molecule type" value="Genomic_DNA"/>
</dbReference>
<dbReference type="PIR" id="C64831">
    <property type="entry name" value="C64831"/>
</dbReference>
<dbReference type="RefSeq" id="NP_415436.1">
    <property type="nucleotide sequence ID" value="NC_000913.3"/>
</dbReference>
<dbReference type="RefSeq" id="WP_000056538.1">
    <property type="nucleotide sequence ID" value="NZ_SSZK01000002.1"/>
</dbReference>
<dbReference type="SMR" id="P75843"/>
<dbReference type="BioGRID" id="4259352">
    <property type="interactions" value="12"/>
</dbReference>
<dbReference type="FunCoup" id="P75843">
    <property type="interactions" value="8"/>
</dbReference>
<dbReference type="IntAct" id="P75843">
    <property type="interactions" value="3"/>
</dbReference>
<dbReference type="STRING" id="511145.b0916"/>
<dbReference type="jPOST" id="P75843"/>
<dbReference type="PaxDb" id="511145-b0916"/>
<dbReference type="EnsemblBacteria" id="AAC74002">
    <property type="protein sequence ID" value="AAC74002"/>
    <property type="gene ID" value="b0916"/>
</dbReference>
<dbReference type="GeneID" id="945524"/>
<dbReference type="KEGG" id="ecj:JW0899"/>
<dbReference type="KEGG" id="eco:b0916"/>
<dbReference type="KEGG" id="ecoc:C3026_05640"/>
<dbReference type="PATRIC" id="fig|511145.12.peg.947"/>
<dbReference type="EchoBASE" id="EB3465"/>
<dbReference type="eggNOG" id="COG3214">
    <property type="taxonomic scope" value="Bacteria"/>
</dbReference>
<dbReference type="HOGENOM" id="CLU_043035_2_0_6"/>
<dbReference type="InParanoid" id="P75843"/>
<dbReference type="OMA" id="FEYWAHE"/>
<dbReference type="OrthoDB" id="9787207at2"/>
<dbReference type="PhylomeDB" id="P75843"/>
<dbReference type="BioCyc" id="EcoCyc:G6471-MONOMER"/>
<dbReference type="BioCyc" id="MetaCyc:G6471-MONOMER"/>
<dbReference type="PRO" id="PR:P75843"/>
<dbReference type="Proteomes" id="UP000000625">
    <property type="component" value="Chromosome"/>
</dbReference>
<dbReference type="GO" id="GO:0019104">
    <property type="term" value="F:DNA N-glycosylase activity"/>
    <property type="evidence" value="ECO:0000314"/>
    <property type="project" value="EcoCyc"/>
</dbReference>
<dbReference type="GO" id="GO:0036297">
    <property type="term" value="P:interstrand cross-link repair"/>
    <property type="evidence" value="ECO:0000314"/>
    <property type="project" value="EcoCyc"/>
</dbReference>
<dbReference type="InterPro" id="IPR009351">
    <property type="entry name" value="AlkZ-like"/>
</dbReference>
<dbReference type="PANTHER" id="PTHR30528">
    <property type="entry name" value="CYTOPLASMIC PROTEIN"/>
    <property type="match status" value="1"/>
</dbReference>
<dbReference type="PANTHER" id="PTHR30528:SF0">
    <property type="entry name" value="CYTOPLASMIC PROTEIN"/>
    <property type="match status" value="1"/>
</dbReference>
<dbReference type="Pfam" id="PF06224">
    <property type="entry name" value="AlkZ-like"/>
    <property type="match status" value="1"/>
</dbReference>
<evidence type="ECO:0000269" key="1">
    <source>
    </source>
</evidence>
<evidence type="ECO:0000303" key="2">
    <source>
    </source>
</evidence>
<evidence type="ECO:0000305" key="3"/>
<evidence type="ECO:0000305" key="4">
    <source>
    </source>
</evidence>
<comment type="function">
    <text evidence="1">DNA glycosylase involved in the repair of interstrand DNA cross-links (ICLs), which are highly toxic DNA lesions that covalently tether the opposing strands of DNA, thereby inhibiting essential cellular processes such as DNA replication and transcription (PubMed:32409837). Acts by unhooking both sides of the ICLs, forming abasic (AP) sites on both strands (PubMed:32409837). Unhooks ICLs derived from various cross-linking agents, including azinomycin B (AZB) and mechlorethamine, also known as nitrogen mustard (NM), protecting cells from the toxicity of these cross-linking agents (PubMed:32409837). In vitro, also acts on monoadducts and can catalyze the excision of N7-methylguanine (7mGua) from an oligonucleotide containing N7-methyldeoxyguanosine (d7mG) (PubMed:32409837). Shows no unhooking activity toward FaPy-ICLs (PubMed:32409837).</text>
</comment>
<comment type="biophysicochemical properties">
    <kinetics>
        <text evidence="1">kcat is 0.004 sec(-1) for AZB-ICL unhooking activity.</text>
    </kinetics>
</comment>
<comment type="induction">
    <text evidence="1">Constitutively expressed (PubMed:32409837). Not induced by DNA damaging agents (PubMed:32409837).</text>
</comment>
<comment type="disruption phenotype">
    <text evidence="1">Deletion of the gene slightly increases cellular sensitivity to the cross-linking agent mechlorethamine (PubMed:32409837). It does not affect sensitivity to the methylating agent methylmethanesulfonate (MMS) (PubMed:32409837).</text>
</comment>
<comment type="similarity">
    <text evidence="3">Belongs to the DNA glycosylase AlkZ-like family.</text>
</comment>
<proteinExistence type="evidence at protein level"/>
<gene>
    <name type="primary">ycaQ</name>
    <name type="ordered locus">b0916</name>
    <name type="ordered locus">JW0899</name>
</gene>
<accession>P75843</accession>
<name>ICLRG_ECOLI</name>
<keyword id="KW-0227">DNA damage</keyword>
<keyword id="KW-0234">DNA repair</keyword>
<keyword id="KW-0238">DNA-binding</keyword>
<keyword id="KW-0378">Hydrolase</keyword>
<keyword id="KW-1185">Reference proteome</keyword>
<reference key="1">
    <citation type="journal article" date="1996" name="DNA Res.">
        <title>A 718-kb DNA sequence of the Escherichia coli K-12 genome corresponding to the 12.7-28.0 min region on the linkage map.</title>
        <authorList>
            <person name="Oshima T."/>
            <person name="Aiba H."/>
            <person name="Baba T."/>
            <person name="Fujita K."/>
            <person name="Hayashi K."/>
            <person name="Honjo A."/>
            <person name="Ikemoto K."/>
            <person name="Inada T."/>
            <person name="Itoh T."/>
            <person name="Kajihara M."/>
            <person name="Kanai K."/>
            <person name="Kashimoto K."/>
            <person name="Kimura S."/>
            <person name="Kitagawa M."/>
            <person name="Makino K."/>
            <person name="Masuda S."/>
            <person name="Miki T."/>
            <person name="Mizobuchi K."/>
            <person name="Mori H."/>
            <person name="Motomura K."/>
            <person name="Nakamura Y."/>
            <person name="Nashimoto H."/>
            <person name="Nishio Y."/>
            <person name="Saito N."/>
            <person name="Sampei G."/>
            <person name="Seki Y."/>
            <person name="Tagami H."/>
            <person name="Takemoto K."/>
            <person name="Wada C."/>
            <person name="Yamamoto Y."/>
            <person name="Yano M."/>
            <person name="Horiuchi T."/>
        </authorList>
    </citation>
    <scope>NUCLEOTIDE SEQUENCE [LARGE SCALE GENOMIC DNA]</scope>
    <source>
        <strain>K12 / W3110 / ATCC 27325 / DSM 5911</strain>
    </source>
</reference>
<reference key="2">
    <citation type="journal article" date="1997" name="Science">
        <title>The complete genome sequence of Escherichia coli K-12.</title>
        <authorList>
            <person name="Blattner F.R."/>
            <person name="Plunkett G. III"/>
            <person name="Bloch C.A."/>
            <person name="Perna N.T."/>
            <person name="Burland V."/>
            <person name="Riley M."/>
            <person name="Collado-Vides J."/>
            <person name="Glasner J.D."/>
            <person name="Rode C.K."/>
            <person name="Mayhew G.F."/>
            <person name="Gregor J."/>
            <person name="Davis N.W."/>
            <person name="Kirkpatrick H.A."/>
            <person name="Goeden M.A."/>
            <person name="Rose D.J."/>
            <person name="Mau B."/>
            <person name="Shao Y."/>
        </authorList>
    </citation>
    <scope>NUCLEOTIDE SEQUENCE [LARGE SCALE GENOMIC DNA]</scope>
    <source>
        <strain>K12 / MG1655 / ATCC 47076</strain>
    </source>
</reference>
<reference key="3">
    <citation type="journal article" date="2006" name="Mol. Syst. Biol.">
        <title>Highly accurate genome sequences of Escherichia coli K-12 strains MG1655 and W3110.</title>
        <authorList>
            <person name="Hayashi K."/>
            <person name="Morooka N."/>
            <person name="Yamamoto Y."/>
            <person name="Fujita K."/>
            <person name="Isono K."/>
            <person name="Choi S."/>
            <person name="Ohtsubo E."/>
            <person name="Baba T."/>
            <person name="Wanner B.L."/>
            <person name="Mori H."/>
            <person name="Horiuchi T."/>
        </authorList>
    </citation>
    <scope>NUCLEOTIDE SEQUENCE [LARGE SCALE GENOMIC DNA]</scope>
    <source>
        <strain>K12 / W3110 / ATCC 27325 / DSM 5911</strain>
    </source>
</reference>
<reference key="4">
    <citation type="journal article" date="2020" name="Nucleic Acids Res.">
        <title>Escherichia coli YcaQ is a DNA glycosylase that unhooks DNA interstrand crosslinks.</title>
        <authorList>
            <person name="Bradley N.P."/>
            <person name="Washburn L.A."/>
            <person name="Christov P.P."/>
            <person name="Watanabe C.M.H."/>
            <person name="Eichman B.F."/>
        </authorList>
    </citation>
    <scope>FUNCTION AS A GLYCOSYLASE</scope>
    <scope>BIOPHYSICOCHEMICAL PROPERTIES</scope>
    <scope>INDUCTION</scope>
    <scope>DISRUPTION PHENOTYPE</scope>
    <scope>MUTAGENESIS OF GLN-45 AND ASP-47</scope>
    <source>
        <strain>K12 / MG1655 / ATCC 47076</strain>
    </source>
</reference>
<feature type="chain" id="PRO_0000168761" description="Interstrand DNA cross-link repair glycosylase">
    <location>
        <begin position="1"/>
        <end position="410"/>
    </location>
</feature>
<feature type="short sequence motif" description="QXD; important for activity" evidence="4">
    <location>
        <begin position="45"/>
        <end position="47"/>
    </location>
</feature>
<feature type="mutagenesis site" description="Abrogates d7mG excision." evidence="1">
    <original>Q</original>
    <variation>A</variation>
    <location>
        <position position="45"/>
    </location>
</feature>
<feature type="mutagenesis site" description="Abrogates d7mG excision." evidence="1">
    <original>D</original>
    <variation>A</variation>
    <location>
        <position position="47"/>
    </location>
</feature>
<feature type="mutagenesis site" description="No effect on base excision activity." evidence="1">
    <original>D</original>
    <variation>N</variation>
    <location>
        <position position="47"/>
    </location>
</feature>
<sequence length="410" mass="47656">MSLPHLSLADARNLHLAAQGLLNKPRRRASLEDIPATISRMSLLQIDTINIVARSPYLVLFSRLGNYPAQWLDESLARGELMEYWAHEACFMPRSDFRLIRHRMLAPEKMGWKYKDAWMQEHEAEIAQLIQHIHDKGPVRSADFEHPRKGASGWWEWKPHKRHLEGLFTAGKVMVIERRNFQRVYDLTHRVMPDWDDERDLVSQTEAEIIMLDNSARSLGIFREQWLADYYRLKRPALAAWREARAEQQQIIAVHVEKLGNLWLHDDLLPLLERALAGKLTATHSAVLSPFDPVVWDRKRAEQLFDFSYRLECYTPAPKRQYGYFVLPLLHRGQLVGRMDAKMHRQTGILEVISLWLQEGIKPTTTLQKGLRQAITDFANWQQATRVTLGCCPQGLFTDCRTGWEIDPVA</sequence>
<organism>
    <name type="scientific">Escherichia coli (strain K12)</name>
    <dbReference type="NCBI Taxonomy" id="83333"/>
    <lineage>
        <taxon>Bacteria</taxon>
        <taxon>Pseudomonadati</taxon>
        <taxon>Pseudomonadota</taxon>
        <taxon>Gammaproteobacteria</taxon>
        <taxon>Enterobacterales</taxon>
        <taxon>Enterobacteriaceae</taxon>
        <taxon>Escherichia</taxon>
    </lineage>
</organism>
<protein>
    <recommendedName>
        <fullName evidence="2">Interstrand DNA cross-link repair glycosylase</fullName>
        <shortName evidence="2">ICL repair glycosylase</shortName>
        <ecNumber evidence="1">3.2.2.-</ecNumber>
    </recommendedName>
    <alternativeName>
        <fullName evidence="2">Alkylpurine DNA glycosylase</fullName>
    </alternativeName>
</protein>